<name>BMAL2_HUMAN</name>
<accession>Q8WYA1</accession>
<accession>B7Z429</accession>
<accession>F5H402</accession>
<accession>Q8WYA2</accession>
<accession>Q8WYA3</accession>
<accession>Q8WYA4</accession>
<accession>Q96J63</accession>
<accession>Q9H2M4</accession>
<accession>Q9NS70</accession>
<accession>Q9NYQ4</accession>
<accession>Q9NYQ5</accession>
<comment type="function">
    <text evidence="8 9 10">Transcriptional activator which forms a core component of the circadian clock. The circadian clock, an internal time-keeping system, regulates various physiological processes through the generation of approximately 24 hour circadian rhythms in gene expression, which are translated into rhythms in metabolism and behavior. It is derived from the Latin roots 'circa' (about) and 'diem' (day) and acts as an important regulator of a wide array of physiological functions including metabolism, sleep, body temperature, blood pressure, endocrine, immune, cardiovascular, and renal function. Consists of two major components: the central clock, residing in the suprachiasmatic nucleus (SCN) of the brain, and the peripheral clocks that are present in nearly every tissue and organ system. Both the central and peripheral clocks can be reset by environmental cues, also known as Zeitgebers (German for 'timegivers'). The predominant Zeitgeber for the central clock is light, which is sensed by retina and signals directly to the SCN. The central clock entrains the peripheral clocks through neuronal and hormonal signals, body temperature and feeding-related cues, aligning all clocks with the external light/dark cycle. Circadian rhythms allow an organism to achieve temporal homeostasis with its environment at the molecular level by regulating gene expression to create a peak of protein expression once every 24 hours to control when a particular physiological process is most active with respect to the solar day. Transcription and translation of core clock components (CLOCK, NPAS2, BMAL1, BMAL2, PER1, PER2, PER3, CRY1 and CRY2) plays a critical role in rhythm generation, whereas delays imposed by post-translational modifications (PTMs) are important for determining the period (tau) of the rhythms (tau refers to the period of a rhythm and is the length, in time, of one complete cycle). A diurnal rhythm is synchronized with the day/night cycle, while the ultradian and infradian rhythms have a period shorter and longer than 24 hours, respectively. Disruptions in the circadian rhythms contribute to the pathology of cardiovascular diseases, cancer, metabolic syndromes and aging. A transcription/translation feedback loop (TTFL) forms the core of the molecular circadian clock mechanism. Transcription factors, CLOCK or NPAS2 and BMAL1 or BMAL2, form the positive limb of the feedback loop, act in the form of a heterodimer and activate the transcription of core clock genes and clock-controlled genes (involved in key metabolic processes), harboring E-box elements (5'-CACGTG-3') within their promoters. The core clock genes: PER1/2/3 and CRY1/2 which are transcriptional repressors form the negative limb of the feedback loop and interact with the CLOCK|NPAS2-BMAL1|BMAL2 heterodimer inhibiting its activity and thereby negatively regulating their own expression. This heterodimer also activates nuclear receptors NR1D1/2 and RORA/B/G, which form a second feedback loop and which activate and repress BMAL1 transcription, respectively. The CLOCK-BMAL2 heterodimer activates the transcription of SERPINE1/PAI1 and BHLHE40/DEC1.</text>
</comment>
<comment type="subunit">
    <text evidence="1 6 8">Component of the circadian core oscillator, which includes the CRY proteins, CLOCK, or NPAS2, BMAL1 or BMAL2, CSNK1D and/or CSNK1E, TIMELESS and the PER proteins. Interacts directly with CLOCK to form the BMAL2-CLOCK transactivator. Can form heterodimers or homodimers which interact directly with CLOCK to form the transcription activator. Interacts with NPAS2 and HIF1A. Interacts with PER2 (By similarity).</text>
</comment>
<comment type="interaction">
    <interactant intactId="EBI-1793513">
        <id>Q8WYA1</id>
    </interactant>
    <interactant intactId="EBI-1794265">
        <id>O15516</id>
        <label>CLOCK</label>
    </interactant>
    <organismsDiffer>false</organismsDiffer>
    <experiments>4</experiments>
</comment>
<comment type="interaction">
    <interactant intactId="EBI-12268276">
        <id>Q8WYA1-3</id>
    </interactant>
    <interactant intactId="EBI-1794265">
        <id>O15516</id>
        <label>CLOCK</label>
    </interactant>
    <organismsDiffer>false</organismsDiffer>
    <experiments>4</experiments>
</comment>
<comment type="interaction">
    <interactant intactId="EBI-12268276">
        <id>Q8WYA1-3</id>
    </interactant>
    <interactant intactId="EBI-1774260">
        <id>Q8WZ74</id>
        <label>CTTNBP2</label>
    </interactant>
    <organismsDiffer>false</organismsDiffer>
    <experiments>3</experiments>
</comment>
<comment type="interaction">
    <interactant intactId="EBI-12268276">
        <id>Q8WYA1-3</id>
    </interactant>
    <interactant intactId="EBI-447470">
        <id>Q99814</id>
        <label>EPAS1</label>
    </interactant>
    <organismsDiffer>false</organismsDiffer>
    <experiments>3</experiments>
</comment>
<comment type="interaction">
    <interactant intactId="EBI-12268276">
        <id>Q8WYA1-3</id>
    </interactant>
    <interactant intactId="EBI-16439278">
        <id>Q6FHY5</id>
        <label>MEOX2</label>
    </interactant>
    <organismsDiffer>false</organismsDiffer>
    <experiments>3</experiments>
</comment>
<comment type="interaction">
    <interactant intactId="EBI-12268276">
        <id>Q8WYA1-3</id>
    </interactant>
    <interactant intactId="EBI-3932727">
        <id>Q99743</id>
        <label>NPAS2</label>
    </interactant>
    <organismsDiffer>false</organismsDiffer>
    <experiments>10</experiments>
</comment>
<comment type="subcellular location">
    <subcellularLocation>
        <location evidence="4 7">Nucleus</location>
    </subcellularLocation>
</comment>
<comment type="alternative products">
    <event type="alternative splicing"/>
    <isoform>
        <id>Q8WYA1-1</id>
        <name>1</name>
        <name>BMAL2a</name>
        <sequence type="displayed"/>
    </isoform>
    <isoform>
        <id>Q8WYA1-2</id>
        <name>2</name>
        <name>BMAL2b</name>
        <sequence type="described" ref="VSP_022584"/>
    </isoform>
    <isoform>
        <id>Q8WYA1-3</id>
        <name>3</name>
        <name>BMAL2c</name>
        <sequence type="described" ref="VSP_022585 VSP_022581 VSP_022584"/>
    </isoform>
    <isoform>
        <id>Q8WYA1-4</id>
        <name>4</name>
        <name>BMAL2d</name>
        <sequence type="described" ref="VSP_022581 VSP_022584"/>
    </isoform>
    <isoform>
        <id>Q8WYA1-5</id>
        <name>5</name>
        <name>CLIF</name>
        <sequence type="described" ref="VSP_022581"/>
    </isoform>
    <isoform>
        <id>Q8WYA1-6</id>
        <name>6</name>
        <sequence type="described" ref="VSP_022580 VSP_022581 VSP_022584"/>
    </isoform>
    <isoform>
        <id>Q8WYA1-7</id>
        <name>7</name>
        <name>MOP9 long form</name>
        <sequence type="described" ref="VSP_022580 VSP_022584"/>
    </isoform>
    <isoform>
        <id>Q8WYA1-8</id>
        <name>8</name>
        <name>MOP9 short form</name>
        <sequence type="described" ref="VSP_022580 VSP_022582 VSP_022583 VSP_022584"/>
    </isoform>
    <isoform>
        <id>Q8WYA1-9</id>
        <name>9</name>
        <sequence type="described" ref="VSP_022585 VSP_022581 VSP_022584 VSP_044773"/>
    </isoform>
</comment>
<comment type="tissue specificity">
    <text evidence="6 7 8">Expressed in fetal brain. Highly expressed in brain and placenta. Lower levels in heart, liver, thymus, kidney and lung. Located to endothelial cells and neuronal cells of the suprachiasmatic nucleus (SCN). Also detected in endothelial cells of the heart, lung and kidney. In the brain, specifically expressed in the thalamus, hippocampus and amygdala.</text>
</comment>
<comment type="induction">
    <text evidence="8">Constitutively expressed. Has no circadian rhythm expression pattern.</text>
</comment>
<gene>
    <name evidence="18" type="primary">BMAL2</name>
    <name type="synonym">ARNTL2</name>
    <name type="synonym">BHLHE6</name>
    <name type="synonym">CLIF</name>
    <name type="synonym">MOP9</name>
    <name type="synonym">PASD9</name>
</gene>
<evidence type="ECO:0000250" key="1">
    <source>
        <dbReference type="UniProtKB" id="Q2VPD4"/>
    </source>
</evidence>
<evidence type="ECO:0000250" key="2">
    <source>
        <dbReference type="UniProtKB" id="Q9WTL8"/>
    </source>
</evidence>
<evidence type="ECO:0000255" key="3">
    <source>
        <dbReference type="PROSITE-ProRule" id="PRU00140"/>
    </source>
</evidence>
<evidence type="ECO:0000255" key="4">
    <source>
        <dbReference type="PROSITE-ProRule" id="PRU00981"/>
    </source>
</evidence>
<evidence type="ECO:0000256" key="5">
    <source>
        <dbReference type="SAM" id="MobiDB-lite"/>
    </source>
</evidence>
<evidence type="ECO:0000269" key="6">
    <source>
    </source>
</evidence>
<evidence type="ECO:0000269" key="7">
    <source>
    </source>
</evidence>
<evidence type="ECO:0000269" key="8">
    <source>
    </source>
</evidence>
<evidence type="ECO:0000269" key="9">
    <source>
    </source>
</evidence>
<evidence type="ECO:0000269" key="10">
    <source>
    </source>
</evidence>
<evidence type="ECO:0000303" key="11">
    <source>
    </source>
</evidence>
<evidence type="ECO:0000303" key="12">
    <source>
    </source>
</evidence>
<evidence type="ECO:0000303" key="13">
    <source>
    </source>
</evidence>
<evidence type="ECO:0000303" key="14">
    <source>
    </source>
</evidence>
<evidence type="ECO:0000303" key="15">
    <source>
    </source>
</evidence>
<evidence type="ECO:0000303" key="16">
    <source>
    </source>
</evidence>
<evidence type="ECO:0000305" key="17"/>
<evidence type="ECO:0000312" key="18">
    <source>
        <dbReference type="HGNC" id="HGNC:18984"/>
    </source>
</evidence>
<evidence type="ECO:0007744" key="19">
    <source>
    </source>
</evidence>
<evidence type="ECO:0007829" key="20">
    <source>
        <dbReference type="PDB" id="2KDK"/>
    </source>
</evidence>
<feature type="chain" id="PRO_0000273631" description="Basic helix-loop-helix ARNT-like protein 2">
    <location>
        <begin position="1"/>
        <end position="636"/>
    </location>
</feature>
<feature type="domain" description="bHLH" evidence="4">
    <location>
        <begin position="107"/>
        <end position="160"/>
    </location>
</feature>
<feature type="domain" description="PAS 1" evidence="3">
    <location>
        <begin position="178"/>
        <end position="250"/>
    </location>
</feature>
<feature type="domain" description="PAS 2" evidence="3">
    <location>
        <begin position="357"/>
        <end position="427"/>
    </location>
</feature>
<feature type="domain" description="PAC">
    <location>
        <begin position="432"/>
        <end position="475"/>
    </location>
</feature>
<feature type="region of interest" description="Disordered" evidence="5">
    <location>
        <begin position="25"/>
        <end position="62"/>
    </location>
</feature>
<feature type="region of interest" description="Interaction with PER2" evidence="1">
    <location>
        <begin position="46"/>
        <end position="258"/>
    </location>
</feature>
<feature type="short sequence motif" description="Nuclear localization signal" evidence="2">
    <location>
        <begin position="49"/>
        <end position="54"/>
    </location>
</feature>
<feature type="short sequence motif" description="Nuclear export signal 1" evidence="2">
    <location>
        <begin position="177"/>
        <end position="187"/>
    </location>
</feature>
<feature type="short sequence motif" description="Nuclear export signal 2" evidence="2">
    <location>
        <begin position="392"/>
        <end position="400"/>
    </location>
</feature>
<feature type="cross-link" description="Glycyl lysine isopeptide (Lys-Gly) (interchain with G-Cter in SUMO2 and SUMO3)" evidence="2">
    <location>
        <position position="287"/>
    </location>
</feature>
<feature type="cross-link" description="Glycyl lysine isopeptide (Lys-Gly) (interchain with G-Cter in SUMO2)" evidence="19">
    <location>
        <position position="294"/>
    </location>
</feature>
<feature type="splice variant" id="VSP_022580" description="In isoform 6, isoform 7 and isoform 8." evidence="11 12">
    <location>
        <begin position="1"/>
        <end position="37"/>
    </location>
</feature>
<feature type="splice variant" id="VSP_022585" description="In isoform 3 and isoform 9." evidence="14 15 16">
    <original>G</original>
    <variation>GEVAGGEATAPG</variation>
    <location>
        <position position="11"/>
    </location>
</feature>
<feature type="splice variant" id="VSP_022582" description="In isoform 8." evidence="11">
    <original>Q</original>
    <variation>H</variation>
    <location>
        <position position="61"/>
    </location>
</feature>
<feature type="splice variant" id="VSP_022581" description="In isoform 3, isoform 4, isoform 5, isoform 6 and isoform 9." evidence="12 13 14 15 16">
    <location>
        <begin position="62"/>
        <end position="95"/>
    </location>
</feature>
<feature type="splice variant" id="VSP_022583" description="In isoform 8." evidence="11">
    <location>
        <begin position="62"/>
        <end position="74"/>
    </location>
</feature>
<feature type="splice variant" id="VSP_022584" description="In isoform 2, isoform 3, isoform 4, isoform 6, isoform 7, isoform 8 and isoform 9." evidence="11 12 14 15 16">
    <location>
        <begin position="96"/>
        <end position="109"/>
    </location>
</feature>
<feature type="splice variant" id="VSP_044773" description="In isoform 9." evidence="15">
    <original>MSNKELFPPSPSEMGELEATRQNQSTVAVHSHEPLLSDGAQLDFDALCDNDDTAMAAFMNYLEAEGGLGDPGDFSDIQWT</original>
    <variation>VMVHSWISMPYVTMMTQPWLH</variation>
    <location>
        <begin position="556"/>
        <end position="635"/>
    </location>
</feature>
<feature type="sequence variant" id="VAR_030158" description="In dbSNP:rs1037921.">
    <original>N</original>
    <variation>S</variation>
    <location>
        <position position="340"/>
    </location>
</feature>
<feature type="sequence variant" id="VAR_030159" description="In dbSNP:rs11049005.">
    <original>A</original>
    <variation>V</variation>
    <location>
        <position position="574"/>
    </location>
</feature>
<feature type="sequence conflict" description="In Ref. 1; BAB01485." evidence="17" ref="1">
    <original>F</original>
    <variation>S</variation>
    <location>
        <position position="41"/>
    </location>
</feature>
<feature type="sequence conflict" description="In Ref. 5; BAH12415." evidence="17" ref="5">
    <original>R</original>
    <variation>G</variation>
    <location>
        <position position="173"/>
    </location>
</feature>
<feature type="sequence conflict" description="In Ref. 3; AAF71306/AAF71307." evidence="17" ref="3">
    <original>A</original>
    <variation>T</variation>
    <location>
        <position position="257"/>
    </location>
</feature>
<feature type="sequence conflict" description="In Ref. 3; AAF71306/AAF71307." evidence="17" ref="3">
    <original>S</original>
    <variation>F</variation>
    <location>
        <position position="276"/>
    </location>
</feature>
<feature type="sequence conflict" description="In Ref. 5; BAH12415." evidence="17" ref="5">
    <original>K</original>
    <variation>R</variation>
    <location>
        <position position="304"/>
    </location>
</feature>
<feature type="sequence conflict" description="In Ref. 1; BAB01485." evidence="17" ref="1">
    <original>P</original>
    <variation>R</variation>
    <location>
        <position position="324"/>
    </location>
</feature>
<feature type="sequence conflict" description="In Ref. 1; BAB01485." evidence="17" ref="1">
    <original>L</original>
    <variation>I</variation>
    <location>
        <position position="527"/>
    </location>
</feature>
<feature type="strand" evidence="20">
    <location>
        <begin position="368"/>
        <end position="375"/>
    </location>
</feature>
<feature type="strand" evidence="20">
    <location>
        <begin position="379"/>
        <end position="384"/>
    </location>
</feature>
<feature type="helix" evidence="20">
    <location>
        <begin position="387"/>
        <end position="391"/>
    </location>
</feature>
<feature type="turn" evidence="20">
    <location>
        <begin position="396"/>
        <end position="398"/>
    </location>
</feature>
<feature type="turn" evidence="20">
    <location>
        <begin position="404"/>
        <end position="407"/>
    </location>
</feature>
<feature type="strand" evidence="20">
    <location>
        <begin position="410"/>
        <end position="412"/>
    </location>
</feature>
<feature type="helix" evidence="20">
    <location>
        <begin position="413"/>
        <end position="424"/>
    </location>
</feature>
<feature type="strand" evidence="20">
    <location>
        <begin position="426"/>
        <end position="428"/>
    </location>
</feature>
<feature type="strand" evidence="20">
    <location>
        <begin position="430"/>
        <end position="438"/>
    </location>
</feature>
<feature type="strand" evidence="20">
    <location>
        <begin position="440"/>
        <end position="442"/>
    </location>
</feature>
<feature type="strand" evidence="20">
    <location>
        <begin position="444"/>
        <end position="455"/>
    </location>
</feature>
<feature type="strand" evidence="20">
    <location>
        <begin position="458"/>
        <end position="460"/>
    </location>
</feature>
<feature type="strand" evidence="20">
    <location>
        <begin position="462"/>
        <end position="470"/>
    </location>
</feature>
<reference key="1">
    <citation type="journal article" date="2000" name="Biochem. Biophys. Res. Commun.">
        <title>cDNA cloning of a novel bHLH-PAS transcription factor superfamily gene, BMAL2; Its mRNA expression, subcellular distribution, and chromosomal localization.</title>
        <authorList>
            <person name="Ikeda M."/>
            <person name="Yu W."/>
            <person name="Hirai M."/>
            <person name="Ebisawa T."/>
            <person name="Honma S."/>
            <person name="Yoshimura K."/>
            <person name="Honma K."/>
            <person name="Nomura M."/>
        </authorList>
    </citation>
    <scope>NUCLEOTIDE SEQUENCE [MRNA] (ISOFORM 6)</scope>
    <scope>SUBCELLULAR LOCATION</scope>
    <scope>TISSUE SPECIFICITY</scope>
    <source>
        <tissue>Brain</tissue>
    </source>
</reference>
<reference key="2">
    <citation type="journal article" date="2000" name="J. Biol. Chem.">
        <title>CLIF, a novel cycle-like factor, regulates the circadian oscillation of plasminogen activator inhibitor-1 gene expression.</title>
        <authorList>
            <person name="Maemura K."/>
            <person name="de La Monte S.M."/>
            <person name="Chin M.T."/>
            <person name="Layne M.D."/>
            <person name="Hsieh C.-M."/>
            <person name="Yet S.-F."/>
            <person name="Perrella M.A."/>
            <person name="Lee M.-E."/>
        </authorList>
    </citation>
    <scope>NUCLEOTIDE SEQUENCE [MRNA] (ISOFORM 5)</scope>
    <scope>FUNCTION</scope>
    <scope>INDUCTION</scope>
    <scope>TISSUE SPECIFICITY</scope>
    <scope>INTERACTION WITH CLOCK</scope>
    <source>
        <tissue>Umbilical vein endothelial cell</tissue>
    </source>
</reference>
<reference key="3">
    <citation type="journal article" date="2000" name="J. Neurosci.">
        <title>The basic helix-loop-helix-PAS protein MOP9 is a brain-specific heterodimeric partner of circadian and hypoxia factors.</title>
        <authorList>
            <person name="Hogenesch J.B."/>
            <person name="Gu Y.-Z."/>
            <person name="Moran S.M."/>
            <person name="Shimomura K."/>
            <person name="Radcliffe L.A."/>
            <person name="Takahashi J.S."/>
            <person name="Bradfield C.A."/>
        </authorList>
    </citation>
    <scope>NUCLEOTIDE SEQUENCE [MRNA] (ISOFORMS 7 AND 8)</scope>
    <scope>TISSUE SPECIFICITY</scope>
    <scope>INTERACTION WITH CLOCK; NPAS2 AND HIF1A</scope>
    <source>
        <tissue>Brain</tissue>
    </source>
</reference>
<reference key="4">
    <citation type="journal article" date="2001" name="Genes Cells">
        <title>Chicken pineal clock genes: implication of BMAL2 as a bidirectional regulator in circadian clock oscillation.</title>
        <authorList>
            <person name="Okano T."/>
            <person name="Yamamoto K."/>
            <person name="Okano K."/>
            <person name="Hirota T."/>
            <person name="Kasahara T."/>
            <person name="Sasaki M."/>
            <person name="Takanaka Y."/>
            <person name="Fukada Y."/>
        </authorList>
    </citation>
    <scope>NUCLEOTIDE SEQUENCE [MRNA] (ISOFORMS 1; 2; 3 AND 4)</scope>
    <source>
        <tissue>Embryonic kidney</tissue>
    </source>
</reference>
<reference key="5">
    <citation type="journal article" date="2004" name="Nat. Genet.">
        <title>Complete sequencing and characterization of 21,243 full-length human cDNAs.</title>
        <authorList>
            <person name="Ota T."/>
            <person name="Suzuki Y."/>
            <person name="Nishikawa T."/>
            <person name="Otsuki T."/>
            <person name="Sugiyama T."/>
            <person name="Irie R."/>
            <person name="Wakamatsu A."/>
            <person name="Hayashi K."/>
            <person name="Sato H."/>
            <person name="Nagai K."/>
            <person name="Kimura K."/>
            <person name="Makita H."/>
            <person name="Sekine M."/>
            <person name="Obayashi M."/>
            <person name="Nishi T."/>
            <person name="Shibahara T."/>
            <person name="Tanaka T."/>
            <person name="Ishii S."/>
            <person name="Yamamoto J."/>
            <person name="Saito K."/>
            <person name="Kawai Y."/>
            <person name="Isono Y."/>
            <person name="Nakamura Y."/>
            <person name="Nagahari K."/>
            <person name="Murakami K."/>
            <person name="Yasuda T."/>
            <person name="Iwayanagi T."/>
            <person name="Wagatsuma M."/>
            <person name="Shiratori A."/>
            <person name="Sudo H."/>
            <person name="Hosoiri T."/>
            <person name="Kaku Y."/>
            <person name="Kodaira H."/>
            <person name="Kondo H."/>
            <person name="Sugawara M."/>
            <person name="Takahashi M."/>
            <person name="Kanda K."/>
            <person name="Yokoi T."/>
            <person name="Furuya T."/>
            <person name="Kikkawa E."/>
            <person name="Omura Y."/>
            <person name="Abe K."/>
            <person name="Kamihara K."/>
            <person name="Katsuta N."/>
            <person name="Sato K."/>
            <person name="Tanikawa M."/>
            <person name="Yamazaki M."/>
            <person name="Ninomiya K."/>
            <person name="Ishibashi T."/>
            <person name="Yamashita H."/>
            <person name="Murakawa K."/>
            <person name="Fujimori K."/>
            <person name="Tanai H."/>
            <person name="Kimata M."/>
            <person name="Watanabe M."/>
            <person name="Hiraoka S."/>
            <person name="Chiba Y."/>
            <person name="Ishida S."/>
            <person name="Ono Y."/>
            <person name="Takiguchi S."/>
            <person name="Watanabe S."/>
            <person name="Yosida M."/>
            <person name="Hotuta T."/>
            <person name="Kusano J."/>
            <person name="Kanehori K."/>
            <person name="Takahashi-Fujii A."/>
            <person name="Hara H."/>
            <person name="Tanase T.-O."/>
            <person name="Nomura Y."/>
            <person name="Togiya S."/>
            <person name="Komai F."/>
            <person name="Hara R."/>
            <person name="Takeuchi K."/>
            <person name="Arita M."/>
            <person name="Imose N."/>
            <person name="Musashino K."/>
            <person name="Yuuki H."/>
            <person name="Oshima A."/>
            <person name="Sasaki N."/>
            <person name="Aotsuka S."/>
            <person name="Yoshikawa Y."/>
            <person name="Matsunawa H."/>
            <person name="Ichihara T."/>
            <person name="Shiohata N."/>
            <person name="Sano S."/>
            <person name="Moriya S."/>
            <person name="Momiyama H."/>
            <person name="Satoh N."/>
            <person name="Takami S."/>
            <person name="Terashima Y."/>
            <person name="Suzuki O."/>
            <person name="Nakagawa S."/>
            <person name="Senoh A."/>
            <person name="Mizoguchi H."/>
            <person name="Goto Y."/>
            <person name="Shimizu F."/>
            <person name="Wakebe H."/>
            <person name="Hishigaki H."/>
            <person name="Watanabe T."/>
            <person name="Sugiyama A."/>
            <person name="Takemoto M."/>
            <person name="Kawakami B."/>
            <person name="Yamazaki M."/>
            <person name="Watanabe K."/>
            <person name="Kumagai A."/>
            <person name="Itakura S."/>
            <person name="Fukuzumi Y."/>
            <person name="Fujimori Y."/>
            <person name="Komiyama M."/>
            <person name="Tashiro H."/>
            <person name="Tanigami A."/>
            <person name="Fujiwara T."/>
            <person name="Ono T."/>
            <person name="Yamada K."/>
            <person name="Fujii Y."/>
            <person name="Ozaki K."/>
            <person name="Hirao M."/>
            <person name="Ohmori Y."/>
            <person name="Kawabata A."/>
            <person name="Hikiji T."/>
            <person name="Kobatake N."/>
            <person name="Inagaki H."/>
            <person name="Ikema Y."/>
            <person name="Okamoto S."/>
            <person name="Okitani R."/>
            <person name="Kawakami T."/>
            <person name="Noguchi S."/>
            <person name="Itoh T."/>
            <person name="Shigeta K."/>
            <person name="Senba T."/>
            <person name="Matsumura K."/>
            <person name="Nakajima Y."/>
            <person name="Mizuno T."/>
            <person name="Morinaga M."/>
            <person name="Sasaki M."/>
            <person name="Togashi T."/>
            <person name="Oyama M."/>
            <person name="Hata H."/>
            <person name="Watanabe M."/>
            <person name="Komatsu T."/>
            <person name="Mizushima-Sugano J."/>
            <person name="Satoh T."/>
            <person name="Shirai Y."/>
            <person name="Takahashi Y."/>
            <person name="Nakagawa K."/>
            <person name="Okumura K."/>
            <person name="Nagase T."/>
            <person name="Nomura N."/>
            <person name="Kikuchi H."/>
            <person name="Masuho Y."/>
            <person name="Yamashita R."/>
            <person name="Nakai K."/>
            <person name="Yada T."/>
            <person name="Nakamura Y."/>
            <person name="Ohara O."/>
            <person name="Isogai T."/>
            <person name="Sugano S."/>
        </authorList>
    </citation>
    <scope>NUCLEOTIDE SEQUENCE [LARGE SCALE MRNA] (ISOFORM 9)</scope>
    <source>
        <tissue>Tongue</tissue>
    </source>
</reference>
<reference key="6">
    <citation type="journal article" date="2006" name="Nature">
        <title>The finished DNA sequence of human chromosome 12.</title>
        <authorList>
            <person name="Scherer S.E."/>
            <person name="Muzny D.M."/>
            <person name="Buhay C.J."/>
            <person name="Chen R."/>
            <person name="Cree A."/>
            <person name="Ding Y."/>
            <person name="Dugan-Rocha S."/>
            <person name="Gill R."/>
            <person name="Gunaratne P."/>
            <person name="Harris R.A."/>
            <person name="Hawes A.C."/>
            <person name="Hernandez J."/>
            <person name="Hodgson A.V."/>
            <person name="Hume J."/>
            <person name="Jackson A."/>
            <person name="Khan Z.M."/>
            <person name="Kovar-Smith C."/>
            <person name="Lewis L.R."/>
            <person name="Lozado R.J."/>
            <person name="Metzker M.L."/>
            <person name="Milosavljevic A."/>
            <person name="Miner G.R."/>
            <person name="Montgomery K.T."/>
            <person name="Morgan M.B."/>
            <person name="Nazareth L.V."/>
            <person name="Scott G."/>
            <person name="Sodergren E."/>
            <person name="Song X.-Z."/>
            <person name="Steffen D."/>
            <person name="Lovering R.C."/>
            <person name="Wheeler D.A."/>
            <person name="Worley K.C."/>
            <person name="Yuan Y."/>
            <person name="Zhang Z."/>
            <person name="Adams C.Q."/>
            <person name="Ansari-Lari M.A."/>
            <person name="Ayele M."/>
            <person name="Brown M.J."/>
            <person name="Chen G."/>
            <person name="Chen Z."/>
            <person name="Clerc-Blankenburg K.P."/>
            <person name="Davis C."/>
            <person name="Delgado O."/>
            <person name="Dinh H.H."/>
            <person name="Draper H."/>
            <person name="Gonzalez-Garay M.L."/>
            <person name="Havlak P."/>
            <person name="Jackson L.R."/>
            <person name="Jacob L.S."/>
            <person name="Kelly S.H."/>
            <person name="Li L."/>
            <person name="Li Z."/>
            <person name="Liu J."/>
            <person name="Liu W."/>
            <person name="Lu J."/>
            <person name="Maheshwari M."/>
            <person name="Nguyen B.-V."/>
            <person name="Okwuonu G.O."/>
            <person name="Pasternak S."/>
            <person name="Perez L.M."/>
            <person name="Plopper F.J.H."/>
            <person name="Santibanez J."/>
            <person name="Shen H."/>
            <person name="Tabor P.E."/>
            <person name="Verduzco D."/>
            <person name="Waldron L."/>
            <person name="Wang Q."/>
            <person name="Williams G.A."/>
            <person name="Zhang J."/>
            <person name="Zhou J."/>
            <person name="Allen C.C."/>
            <person name="Amin A.G."/>
            <person name="Anyalebechi V."/>
            <person name="Bailey M."/>
            <person name="Barbaria J.A."/>
            <person name="Bimage K.E."/>
            <person name="Bryant N.P."/>
            <person name="Burch P.E."/>
            <person name="Burkett C.E."/>
            <person name="Burrell K.L."/>
            <person name="Calderon E."/>
            <person name="Cardenas V."/>
            <person name="Carter K."/>
            <person name="Casias K."/>
            <person name="Cavazos I."/>
            <person name="Cavazos S.R."/>
            <person name="Ceasar H."/>
            <person name="Chacko J."/>
            <person name="Chan S.N."/>
            <person name="Chavez D."/>
            <person name="Christopoulos C."/>
            <person name="Chu J."/>
            <person name="Cockrell R."/>
            <person name="Cox C.D."/>
            <person name="Dang M."/>
            <person name="Dathorne S.R."/>
            <person name="David R."/>
            <person name="Davis C.M."/>
            <person name="Davy-Carroll L."/>
            <person name="Deshazo D.R."/>
            <person name="Donlin J.E."/>
            <person name="D'Souza L."/>
            <person name="Eaves K.A."/>
            <person name="Egan A."/>
            <person name="Emery-Cohen A.J."/>
            <person name="Escotto M."/>
            <person name="Flagg N."/>
            <person name="Forbes L.D."/>
            <person name="Gabisi A.M."/>
            <person name="Garza M."/>
            <person name="Hamilton C."/>
            <person name="Henderson N."/>
            <person name="Hernandez O."/>
            <person name="Hines S."/>
            <person name="Hogues M.E."/>
            <person name="Huang M."/>
            <person name="Idlebird D.G."/>
            <person name="Johnson R."/>
            <person name="Jolivet A."/>
            <person name="Jones S."/>
            <person name="Kagan R."/>
            <person name="King L.M."/>
            <person name="Leal B."/>
            <person name="Lebow H."/>
            <person name="Lee S."/>
            <person name="LeVan J.M."/>
            <person name="Lewis L.C."/>
            <person name="London P."/>
            <person name="Lorensuhewa L.M."/>
            <person name="Loulseged H."/>
            <person name="Lovett D.A."/>
            <person name="Lucier A."/>
            <person name="Lucier R.L."/>
            <person name="Ma J."/>
            <person name="Madu R.C."/>
            <person name="Mapua P."/>
            <person name="Martindale A.D."/>
            <person name="Martinez E."/>
            <person name="Massey E."/>
            <person name="Mawhiney S."/>
            <person name="Meador M.G."/>
            <person name="Mendez S."/>
            <person name="Mercado C."/>
            <person name="Mercado I.C."/>
            <person name="Merritt C.E."/>
            <person name="Miner Z.L."/>
            <person name="Minja E."/>
            <person name="Mitchell T."/>
            <person name="Mohabbat F."/>
            <person name="Mohabbat K."/>
            <person name="Montgomery B."/>
            <person name="Moore N."/>
            <person name="Morris S."/>
            <person name="Munidasa M."/>
            <person name="Ngo R.N."/>
            <person name="Nguyen N.B."/>
            <person name="Nickerson E."/>
            <person name="Nwaokelemeh O.O."/>
            <person name="Nwokenkwo S."/>
            <person name="Obregon M."/>
            <person name="Oguh M."/>
            <person name="Oragunye N."/>
            <person name="Oviedo R.J."/>
            <person name="Parish B.J."/>
            <person name="Parker D.N."/>
            <person name="Parrish J."/>
            <person name="Parks K.L."/>
            <person name="Paul H.A."/>
            <person name="Payton B.A."/>
            <person name="Perez A."/>
            <person name="Perrin W."/>
            <person name="Pickens A."/>
            <person name="Primus E.L."/>
            <person name="Pu L.-L."/>
            <person name="Puazo M."/>
            <person name="Quiles M.M."/>
            <person name="Quiroz J.B."/>
            <person name="Rabata D."/>
            <person name="Reeves K."/>
            <person name="Ruiz S.J."/>
            <person name="Shao H."/>
            <person name="Sisson I."/>
            <person name="Sonaike T."/>
            <person name="Sorelle R.P."/>
            <person name="Sutton A.E."/>
            <person name="Svatek A.F."/>
            <person name="Svetz L.A."/>
            <person name="Tamerisa K.S."/>
            <person name="Taylor T.R."/>
            <person name="Teague B."/>
            <person name="Thomas N."/>
            <person name="Thorn R.D."/>
            <person name="Trejos Z.Y."/>
            <person name="Trevino B.K."/>
            <person name="Ukegbu O.N."/>
            <person name="Urban J.B."/>
            <person name="Vasquez L.I."/>
            <person name="Vera V.A."/>
            <person name="Villasana D.M."/>
            <person name="Wang L."/>
            <person name="Ward-Moore S."/>
            <person name="Warren J.T."/>
            <person name="Wei X."/>
            <person name="White F."/>
            <person name="Williamson A.L."/>
            <person name="Wleczyk R."/>
            <person name="Wooden H.S."/>
            <person name="Wooden S.H."/>
            <person name="Yen J."/>
            <person name="Yoon L."/>
            <person name="Yoon V."/>
            <person name="Zorrilla S.E."/>
            <person name="Nelson D."/>
            <person name="Kucherlapati R."/>
            <person name="Weinstock G."/>
            <person name="Gibbs R.A."/>
        </authorList>
    </citation>
    <scope>NUCLEOTIDE SEQUENCE [LARGE SCALE GENOMIC DNA]</scope>
</reference>
<reference key="7">
    <citation type="journal article" date="2004" name="Genome Res.">
        <title>The status, quality, and expansion of the NIH full-length cDNA project: the Mammalian Gene Collection (MGC).</title>
        <authorList>
            <consortium name="The MGC Project Team"/>
        </authorList>
    </citation>
    <scope>NUCLEOTIDE SEQUENCE [LARGE SCALE MRNA] (ISOFORMS 3; 4 AND 5)</scope>
    <source>
        <tissue>Placenta</tissue>
    </source>
</reference>
<reference key="8">
    <citation type="journal article" date="2003" name="J. Mol. Cell. Cardiol.">
        <title>Regulation of the PAI-1 promoter by circadian clock components: differential activation by BMAL1 and BMAL2.</title>
        <authorList>
            <person name="Schoenhard J.A."/>
            <person name="Smith L.H."/>
            <person name="Painter C.A."/>
            <person name="Eren M."/>
            <person name="Johnson C.H."/>
            <person name="Vaughan D.E."/>
        </authorList>
    </citation>
    <scope>FUNCTION</scope>
</reference>
<reference key="9">
    <citation type="journal article" date="2004" name="Biochem. Biophys. Res. Commun.">
        <title>A novel autofeedback loop of Dec1 transcription involved in circadian rhythm regulation.</title>
        <authorList>
            <person name="Kawamoto T."/>
            <person name="Noshiro M."/>
            <person name="Sato F."/>
            <person name="Maemura K."/>
            <person name="Takeda N."/>
            <person name="Nagai R."/>
            <person name="Iwata T."/>
            <person name="Fujimoto K."/>
            <person name="Furukawa M."/>
            <person name="Miyazaki K."/>
            <person name="Honma S."/>
            <person name="Honma K.I."/>
            <person name="Kato Y."/>
        </authorList>
    </citation>
    <scope>FUNCTION</scope>
</reference>
<reference key="10">
    <citation type="journal article" date="2017" name="Nat. Struct. Mol. Biol.">
        <title>Site-specific mapping of the human SUMO proteome reveals co-modification with phosphorylation.</title>
        <authorList>
            <person name="Hendriks I.A."/>
            <person name="Lyon D."/>
            <person name="Young C."/>
            <person name="Jensen L.J."/>
            <person name="Vertegaal A.C."/>
            <person name="Nielsen M.L."/>
        </authorList>
    </citation>
    <scope>SUMOYLATION [LARGE SCALE ANALYSIS] AT LYS-294</scope>
    <scope>IDENTIFICATION BY MASS SPECTROMETRY [LARGE SCALE ANALYSIS]</scope>
</reference>
<sequence>MAAEEEAAAGGKVLREENQCIAPVVSSRVSPGTRPTAMGSFSSHMTEFPRKRKGSDSDPSQSGIMTEKVVEKLSQNPLTYLLSTRIEISASSGSRVEDGEHQVKMKAFREAHSQTEKRRRDKMNNLIEELSAMIPQCNPMARKLDKLTVLRMAVQHLRSLKGLTNSYVGSNYRPSFLQDNELRHLILKTAEGFLFVVGCERGKILFVSKSVSKILNYDQASLTGQSLFDFLHPKDVAKVKEQLSSFDISPREKLIDAKTGLQVHSNLHAGRTRVYSGSRRSFFCRIKSCKISVKEEHGCLPNSKKKEHRKFYTIHCTGYLRSWPPNIVGMEEERNSKKDNSNFTCLVAIGRLQPYIVPQNSGEINVKPTEFITRFAVNGKFVYVDQRATAILGYLPQELLGTSCYEYFHQDDHNNLTDKHKAVLQSKEKILTDSYKFRAKDGSFVTLKSQWFSFTNPWTKELEYIVSVNTLVLGHSEPGEASFLPCSSQSSEESSRQSCMSVPGMSTGTVLGAGSIGTDIANEILDLQRLQSSSYLDDSSPTGLMKDTHTVNCRSMSNKELFPPSPSEMGELEATRQNQSTVAVHSHEPLLSDGAQLDFDALCDNDDTAMAAFMNYLEAEGGLGDPGDFSDIQWTL</sequence>
<protein>
    <recommendedName>
        <fullName evidence="18">Basic helix-loop-helix ARNT-like protein 2</fullName>
    </recommendedName>
    <alternativeName>
        <fullName>Aryl hydrocarbon receptor nuclear translocator-like protein 2</fullName>
    </alternativeName>
    <alternativeName>
        <fullName>Basic-helix-loop-helix-PAS protein MOP9</fullName>
    </alternativeName>
    <alternativeName>
        <fullName>Brain and muscle ARNT-like 2</fullName>
    </alternativeName>
    <alternativeName>
        <fullName>CYCLE-like factor</fullName>
        <shortName>CLIF</shortName>
    </alternativeName>
    <alternativeName>
        <fullName>Class E basic helix-loop-helix protein 6</fullName>
        <shortName>bHLHe6</shortName>
    </alternativeName>
    <alternativeName>
        <fullName>Member of PAS protein 9</fullName>
    </alternativeName>
    <alternativeName>
        <fullName>PAS domain-containing protein 9</fullName>
    </alternativeName>
</protein>
<proteinExistence type="evidence at protein level"/>
<keyword id="KW-0002">3D-structure</keyword>
<keyword id="KW-0010">Activator</keyword>
<keyword id="KW-0025">Alternative splicing</keyword>
<keyword id="KW-0090">Biological rhythms</keyword>
<keyword id="KW-0238">DNA-binding</keyword>
<keyword id="KW-1017">Isopeptide bond</keyword>
<keyword id="KW-0539">Nucleus</keyword>
<keyword id="KW-1267">Proteomics identification</keyword>
<keyword id="KW-1185">Reference proteome</keyword>
<keyword id="KW-0677">Repeat</keyword>
<keyword id="KW-0804">Transcription</keyword>
<keyword id="KW-0805">Transcription regulation</keyword>
<keyword id="KW-0832">Ubl conjugation</keyword>
<dbReference type="EMBL" id="AB039921">
    <property type="protein sequence ID" value="BAB01485.1"/>
    <property type="molecule type" value="mRNA"/>
</dbReference>
<dbReference type="EMBL" id="AF256215">
    <property type="protein sequence ID" value="AAG34652.1"/>
    <property type="molecule type" value="mRNA"/>
</dbReference>
<dbReference type="EMBL" id="AF231338">
    <property type="protein sequence ID" value="AAF71306.1"/>
    <property type="molecule type" value="mRNA"/>
</dbReference>
<dbReference type="EMBL" id="AF231339">
    <property type="protein sequence ID" value="AAF71307.1"/>
    <property type="molecule type" value="mRNA"/>
</dbReference>
<dbReference type="EMBL" id="AF246960">
    <property type="protein sequence ID" value="AAL50339.1"/>
    <property type="molecule type" value="mRNA"/>
</dbReference>
<dbReference type="EMBL" id="AF246961">
    <property type="protein sequence ID" value="AAL50340.1"/>
    <property type="molecule type" value="mRNA"/>
</dbReference>
<dbReference type="EMBL" id="AF246962">
    <property type="protein sequence ID" value="AAL50341.1"/>
    <property type="molecule type" value="mRNA"/>
</dbReference>
<dbReference type="EMBL" id="AF246963">
    <property type="protein sequence ID" value="AAL50342.1"/>
    <property type="molecule type" value="mRNA"/>
</dbReference>
<dbReference type="EMBL" id="AK296706">
    <property type="protein sequence ID" value="BAH12415.1"/>
    <property type="molecule type" value="mRNA"/>
</dbReference>
<dbReference type="EMBL" id="AC068794">
    <property type="status" value="NOT_ANNOTATED_CDS"/>
    <property type="molecule type" value="Genomic_DNA"/>
</dbReference>
<dbReference type="EMBL" id="AC092829">
    <property type="status" value="NOT_ANNOTATED_CDS"/>
    <property type="molecule type" value="Genomic_DNA"/>
</dbReference>
<dbReference type="EMBL" id="BC000172">
    <property type="protein sequence ID" value="AAH00172.3"/>
    <property type="molecule type" value="mRNA"/>
</dbReference>
<dbReference type="EMBL" id="BC125061">
    <property type="protein sequence ID" value="AAI25062.1"/>
    <property type="molecule type" value="mRNA"/>
</dbReference>
<dbReference type="EMBL" id="BC125062">
    <property type="protein sequence ID" value="AAI25063.1"/>
    <property type="molecule type" value="mRNA"/>
</dbReference>
<dbReference type="CCDS" id="CCDS58219.1">
    <molecule id="Q8WYA1-2"/>
</dbReference>
<dbReference type="CCDS" id="CCDS58220.1">
    <molecule id="Q8WYA1-4"/>
</dbReference>
<dbReference type="CCDS" id="CCDS58221.1">
    <molecule id="Q8WYA1-3"/>
</dbReference>
<dbReference type="CCDS" id="CCDS58222.1">
    <molecule id="Q8WYA1-9"/>
</dbReference>
<dbReference type="CCDS" id="CCDS8712.1">
    <molecule id="Q8WYA1-1"/>
</dbReference>
<dbReference type="CCDS" id="CCDS91666.1">
    <molecule id="Q8WYA1-5"/>
</dbReference>
<dbReference type="RefSeq" id="NP_001234931.1">
    <molecule id="Q8WYA1-2"/>
    <property type="nucleotide sequence ID" value="NM_001248002.3"/>
</dbReference>
<dbReference type="RefSeq" id="NP_001234932.1">
    <molecule id="Q8WYA1-3"/>
    <property type="nucleotide sequence ID" value="NM_001248003.3"/>
</dbReference>
<dbReference type="RefSeq" id="NP_001234933.1">
    <molecule id="Q8WYA1-4"/>
    <property type="nucleotide sequence ID" value="NM_001248004.3"/>
</dbReference>
<dbReference type="RefSeq" id="NP_001234934.1">
    <molecule id="Q8WYA1-9"/>
    <property type="nucleotide sequence ID" value="NM_001248005.3"/>
</dbReference>
<dbReference type="RefSeq" id="NP_001381455.1">
    <molecule id="Q8WYA1-5"/>
    <property type="nucleotide sequence ID" value="NM_001394526.1"/>
</dbReference>
<dbReference type="RefSeq" id="NP_064568.3">
    <molecule id="Q8WYA1-1"/>
    <property type="nucleotide sequence ID" value="NM_020183.4"/>
</dbReference>
<dbReference type="PDB" id="2KDK">
    <property type="method" value="NMR"/>
    <property type="chains" value="A=360-477"/>
</dbReference>
<dbReference type="PDBsum" id="2KDK"/>
<dbReference type="SMR" id="Q8WYA1"/>
<dbReference type="BioGRID" id="121263">
    <property type="interactions" value="34"/>
</dbReference>
<dbReference type="ComplexPortal" id="CPX-3230">
    <property type="entry name" value="CLOCK-BMAL2 transcription complex"/>
</dbReference>
<dbReference type="FunCoup" id="Q8WYA1">
    <property type="interactions" value="571"/>
</dbReference>
<dbReference type="IntAct" id="Q8WYA1">
    <property type="interactions" value="24"/>
</dbReference>
<dbReference type="STRING" id="9606.ENSP00000266503"/>
<dbReference type="iPTMnet" id="Q8WYA1"/>
<dbReference type="PhosphoSitePlus" id="Q8WYA1"/>
<dbReference type="BioMuta" id="ARNTL2"/>
<dbReference type="DMDM" id="124007121"/>
<dbReference type="jPOST" id="Q8WYA1"/>
<dbReference type="MassIVE" id="Q8WYA1"/>
<dbReference type="PaxDb" id="9606-ENSP00000266503"/>
<dbReference type="PeptideAtlas" id="Q8WYA1"/>
<dbReference type="ProteomicsDB" id="26427"/>
<dbReference type="ProteomicsDB" id="75143">
    <molecule id="Q8WYA1-1"/>
</dbReference>
<dbReference type="ProteomicsDB" id="75144">
    <molecule id="Q8WYA1-2"/>
</dbReference>
<dbReference type="ProteomicsDB" id="75145">
    <molecule id="Q8WYA1-3"/>
</dbReference>
<dbReference type="ProteomicsDB" id="75146">
    <molecule id="Q8WYA1-4"/>
</dbReference>
<dbReference type="ProteomicsDB" id="75147">
    <molecule id="Q8WYA1-5"/>
</dbReference>
<dbReference type="ProteomicsDB" id="75148">
    <molecule id="Q8WYA1-6"/>
</dbReference>
<dbReference type="ProteomicsDB" id="75149">
    <molecule id="Q8WYA1-7"/>
</dbReference>
<dbReference type="ProteomicsDB" id="75150">
    <molecule id="Q8WYA1-8"/>
</dbReference>
<dbReference type="Antibodypedia" id="12657">
    <property type="antibodies" value="118 antibodies from 23 providers"/>
</dbReference>
<dbReference type="DNASU" id="56938"/>
<dbReference type="Ensembl" id="ENST00000261178.9">
    <molecule id="Q8WYA1-4"/>
    <property type="protein sequence ID" value="ENSP00000261178.5"/>
    <property type="gene ID" value="ENSG00000029153.15"/>
</dbReference>
<dbReference type="Ensembl" id="ENST00000266503.10">
    <molecule id="Q8WYA1-1"/>
    <property type="protein sequence ID" value="ENSP00000266503.5"/>
    <property type="gene ID" value="ENSG00000029153.15"/>
</dbReference>
<dbReference type="Ensembl" id="ENST00000311001.9">
    <molecule id="Q8WYA1-2"/>
    <property type="protein sequence ID" value="ENSP00000312247.5"/>
    <property type="gene ID" value="ENSG00000029153.15"/>
</dbReference>
<dbReference type="Ensembl" id="ENST00000395901.6">
    <molecule id="Q8WYA1-3"/>
    <property type="protein sequence ID" value="ENSP00000379238.2"/>
    <property type="gene ID" value="ENSG00000029153.15"/>
</dbReference>
<dbReference type="Ensembl" id="ENST00000542388.1">
    <molecule id="Q8WYA1-6"/>
    <property type="protein sequence ID" value="ENSP00000445836.1"/>
    <property type="gene ID" value="ENSG00000029153.15"/>
</dbReference>
<dbReference type="Ensembl" id="ENST00000544915.5">
    <molecule id="Q8WYA1-5"/>
    <property type="protein sequence ID" value="ENSP00000442438.1"/>
    <property type="gene ID" value="ENSG00000029153.15"/>
</dbReference>
<dbReference type="Ensembl" id="ENST00000546179.5">
    <molecule id="Q8WYA1-9"/>
    <property type="protein sequence ID" value="ENSP00000438545.1"/>
    <property type="gene ID" value="ENSG00000029153.15"/>
</dbReference>
<dbReference type="GeneID" id="56938"/>
<dbReference type="KEGG" id="hsa:56938"/>
<dbReference type="MANE-Select" id="ENST00000266503.10">
    <property type="protein sequence ID" value="ENSP00000266503.5"/>
    <property type="RefSeq nucleotide sequence ID" value="NM_020183.6"/>
    <property type="RefSeq protein sequence ID" value="NP_064568.3"/>
</dbReference>
<dbReference type="UCSC" id="uc001rht.3">
    <molecule id="Q8WYA1-1"/>
    <property type="organism name" value="human"/>
</dbReference>
<dbReference type="AGR" id="HGNC:18984"/>
<dbReference type="CTD" id="56938"/>
<dbReference type="DisGeNET" id="56938"/>
<dbReference type="GeneCards" id="BMAL2"/>
<dbReference type="HGNC" id="HGNC:18984">
    <property type="gene designation" value="BMAL2"/>
</dbReference>
<dbReference type="HPA" id="ENSG00000029153">
    <property type="expression patterns" value="Tissue enhanced (esophagus, lymphoid tissue)"/>
</dbReference>
<dbReference type="MIM" id="614517">
    <property type="type" value="gene"/>
</dbReference>
<dbReference type="neXtProt" id="NX_Q8WYA1"/>
<dbReference type="OpenTargets" id="ENSG00000029153"/>
<dbReference type="PharmGKB" id="PA134896555"/>
<dbReference type="VEuPathDB" id="HostDB:ENSG00000029153"/>
<dbReference type="eggNOG" id="KOG3561">
    <property type="taxonomic scope" value="Eukaryota"/>
</dbReference>
<dbReference type="GeneTree" id="ENSGT00940000160423"/>
<dbReference type="HOGENOM" id="CLU_011864_2_2_1"/>
<dbReference type="InParanoid" id="Q8WYA1"/>
<dbReference type="OMA" id="RIKCSRI"/>
<dbReference type="OrthoDB" id="71302at2759"/>
<dbReference type="PAN-GO" id="Q8WYA1">
    <property type="GO annotations" value="5 GO annotations based on evolutionary models"/>
</dbReference>
<dbReference type="PhylomeDB" id="Q8WYA1"/>
<dbReference type="TreeFam" id="TF319983"/>
<dbReference type="PathwayCommons" id="Q8WYA1"/>
<dbReference type="Reactome" id="R-HSA-1368108">
    <property type="pathway name" value="BMAL1:CLOCK,NPAS2 activates circadian gene expression"/>
</dbReference>
<dbReference type="SignaLink" id="Q8WYA1"/>
<dbReference type="SIGNOR" id="Q8WYA1"/>
<dbReference type="BioGRID-ORCS" id="56938">
    <property type="hits" value="17 hits in 1173 CRISPR screens"/>
</dbReference>
<dbReference type="ChiTaRS" id="ARNTL2">
    <property type="organism name" value="human"/>
</dbReference>
<dbReference type="EvolutionaryTrace" id="Q8WYA1"/>
<dbReference type="GeneWiki" id="ARNTL2"/>
<dbReference type="GenomeRNAi" id="56938"/>
<dbReference type="Pharos" id="Q8WYA1">
    <property type="development level" value="Tbio"/>
</dbReference>
<dbReference type="PRO" id="PR:Q8WYA1"/>
<dbReference type="Proteomes" id="UP000005640">
    <property type="component" value="Chromosome 12"/>
</dbReference>
<dbReference type="RNAct" id="Q8WYA1">
    <property type="molecule type" value="protein"/>
</dbReference>
<dbReference type="Bgee" id="ENSG00000029153">
    <property type="expression patterns" value="Expressed in lower esophagus mucosa and 131 other cell types or tissues"/>
</dbReference>
<dbReference type="ExpressionAtlas" id="Q8WYA1">
    <property type="expression patterns" value="baseline and differential"/>
</dbReference>
<dbReference type="GO" id="GO:0034751">
    <property type="term" value="C:aryl hydrocarbon receptor complex"/>
    <property type="evidence" value="ECO:0000318"/>
    <property type="project" value="GO_Central"/>
</dbReference>
<dbReference type="GO" id="GO:0000785">
    <property type="term" value="C:chromatin"/>
    <property type="evidence" value="ECO:0000247"/>
    <property type="project" value="NTNU_SB"/>
</dbReference>
<dbReference type="GO" id="GO:1990513">
    <property type="term" value="C:CLOCK-BMAL transcription complex"/>
    <property type="evidence" value="ECO:0000353"/>
    <property type="project" value="ComplexPortal"/>
</dbReference>
<dbReference type="GO" id="GO:0005737">
    <property type="term" value="C:cytoplasm"/>
    <property type="evidence" value="ECO:0007669"/>
    <property type="project" value="InterPro"/>
</dbReference>
<dbReference type="GO" id="GO:0005730">
    <property type="term" value="C:nucleolus"/>
    <property type="evidence" value="ECO:0000314"/>
    <property type="project" value="HPA"/>
</dbReference>
<dbReference type="GO" id="GO:0005654">
    <property type="term" value="C:nucleoplasm"/>
    <property type="evidence" value="ECO:0000314"/>
    <property type="project" value="HPA"/>
</dbReference>
<dbReference type="GO" id="GO:0005634">
    <property type="term" value="C:nucleus"/>
    <property type="evidence" value="ECO:0000314"/>
    <property type="project" value="MGI"/>
</dbReference>
<dbReference type="GO" id="GO:0003700">
    <property type="term" value="F:DNA-binding transcription factor activity"/>
    <property type="evidence" value="ECO:0000314"/>
    <property type="project" value="MGI"/>
</dbReference>
<dbReference type="GO" id="GO:0000981">
    <property type="term" value="F:DNA-binding transcription factor activity, RNA polymerase II-specific"/>
    <property type="evidence" value="ECO:0000314"/>
    <property type="project" value="BHF-UCL"/>
</dbReference>
<dbReference type="GO" id="GO:0070888">
    <property type="term" value="F:E-box binding"/>
    <property type="evidence" value="ECO:0000314"/>
    <property type="project" value="UniProtKB"/>
</dbReference>
<dbReference type="GO" id="GO:0046983">
    <property type="term" value="F:protein dimerization activity"/>
    <property type="evidence" value="ECO:0007669"/>
    <property type="project" value="InterPro"/>
</dbReference>
<dbReference type="GO" id="GO:0000978">
    <property type="term" value="F:RNA polymerase II cis-regulatory region sequence-specific DNA binding"/>
    <property type="evidence" value="ECO:0000314"/>
    <property type="project" value="BHF-UCL"/>
</dbReference>
<dbReference type="GO" id="GO:0032922">
    <property type="term" value="P:circadian regulation of gene expression"/>
    <property type="evidence" value="ECO:0000314"/>
    <property type="project" value="ComplexPortal"/>
</dbReference>
<dbReference type="GO" id="GO:0007623">
    <property type="term" value="P:circadian rhythm"/>
    <property type="evidence" value="ECO:0000314"/>
    <property type="project" value="MGI"/>
</dbReference>
<dbReference type="GO" id="GO:0009649">
    <property type="term" value="P:entrainment of circadian clock"/>
    <property type="evidence" value="ECO:0000303"/>
    <property type="project" value="UniProtKB"/>
</dbReference>
<dbReference type="GO" id="GO:0042753">
    <property type="term" value="P:positive regulation of circadian rhythm"/>
    <property type="evidence" value="ECO:0000314"/>
    <property type="project" value="ComplexPortal"/>
</dbReference>
<dbReference type="GO" id="GO:0045893">
    <property type="term" value="P:positive regulation of DNA-templated transcription"/>
    <property type="evidence" value="ECO:0000314"/>
    <property type="project" value="UniProtKB"/>
</dbReference>
<dbReference type="GO" id="GO:0045944">
    <property type="term" value="P:positive regulation of transcription by RNA polymerase II"/>
    <property type="evidence" value="ECO:0000314"/>
    <property type="project" value="BHF-UCL"/>
</dbReference>
<dbReference type="GO" id="GO:0006355">
    <property type="term" value="P:regulation of DNA-templated transcription"/>
    <property type="evidence" value="ECO:0000303"/>
    <property type="project" value="UniProtKB"/>
</dbReference>
<dbReference type="GO" id="GO:0006357">
    <property type="term" value="P:regulation of transcription by RNA polymerase II"/>
    <property type="evidence" value="ECO:0000314"/>
    <property type="project" value="MGI"/>
</dbReference>
<dbReference type="CDD" id="cd11469">
    <property type="entry name" value="bHLH-PAS_ARNTL2_PASD9"/>
    <property type="match status" value="1"/>
</dbReference>
<dbReference type="CDD" id="cd00130">
    <property type="entry name" value="PAS"/>
    <property type="match status" value="2"/>
</dbReference>
<dbReference type="FunFam" id="4.10.280.10:FF:000018">
    <property type="entry name" value="Aryl hydrocarbon receptor nuclear translocator-like protein 1"/>
    <property type="match status" value="1"/>
</dbReference>
<dbReference type="FunFam" id="3.30.450.20:FF:000006">
    <property type="entry name" value="aryl hydrocarbon receptor nuclear translocator-like protein 1"/>
    <property type="match status" value="1"/>
</dbReference>
<dbReference type="FunFam" id="3.30.450.20:FF:000010">
    <property type="entry name" value="Aryl hydrocarbon receptor nuclear translocator-like, isoform CRA_b"/>
    <property type="match status" value="1"/>
</dbReference>
<dbReference type="Gene3D" id="4.10.280.10">
    <property type="entry name" value="Helix-loop-helix DNA-binding domain"/>
    <property type="match status" value="1"/>
</dbReference>
<dbReference type="Gene3D" id="3.30.450.20">
    <property type="entry name" value="PAS domain"/>
    <property type="match status" value="2"/>
</dbReference>
<dbReference type="InterPro" id="IPR011598">
    <property type="entry name" value="bHLH_dom"/>
</dbReference>
<dbReference type="InterPro" id="IPR050933">
    <property type="entry name" value="Circadian_TF"/>
</dbReference>
<dbReference type="InterPro" id="IPR036638">
    <property type="entry name" value="HLH_DNA-bd_sf"/>
</dbReference>
<dbReference type="InterPro" id="IPR001067">
    <property type="entry name" value="Nuc_translocat"/>
</dbReference>
<dbReference type="InterPro" id="IPR000014">
    <property type="entry name" value="PAS"/>
</dbReference>
<dbReference type="InterPro" id="IPR035965">
    <property type="entry name" value="PAS-like_dom_sf"/>
</dbReference>
<dbReference type="InterPro" id="IPR013767">
    <property type="entry name" value="PAS_fold"/>
</dbReference>
<dbReference type="NCBIfam" id="TIGR00229">
    <property type="entry name" value="sensory_box"/>
    <property type="match status" value="1"/>
</dbReference>
<dbReference type="PANTHER" id="PTHR23042">
    <property type="entry name" value="CIRCADIAN PROTEIN CLOCK/ARNT/BMAL/PAS"/>
    <property type="match status" value="1"/>
</dbReference>
<dbReference type="Pfam" id="PF00010">
    <property type="entry name" value="HLH"/>
    <property type="match status" value="1"/>
</dbReference>
<dbReference type="Pfam" id="PF00989">
    <property type="entry name" value="PAS"/>
    <property type="match status" value="1"/>
</dbReference>
<dbReference type="Pfam" id="PF14598">
    <property type="entry name" value="PAS_11"/>
    <property type="match status" value="1"/>
</dbReference>
<dbReference type="PRINTS" id="PR00785">
    <property type="entry name" value="NCTRNSLOCATR"/>
</dbReference>
<dbReference type="SMART" id="SM00353">
    <property type="entry name" value="HLH"/>
    <property type="match status" value="1"/>
</dbReference>
<dbReference type="SMART" id="SM00091">
    <property type="entry name" value="PAS"/>
    <property type="match status" value="2"/>
</dbReference>
<dbReference type="SUPFAM" id="SSF47459">
    <property type="entry name" value="HLH, helix-loop-helix DNA-binding domain"/>
    <property type="match status" value="1"/>
</dbReference>
<dbReference type="SUPFAM" id="SSF55785">
    <property type="entry name" value="PYP-like sensor domain (PAS domain)"/>
    <property type="match status" value="2"/>
</dbReference>
<dbReference type="PROSITE" id="PS50888">
    <property type="entry name" value="BHLH"/>
    <property type="match status" value="1"/>
</dbReference>
<dbReference type="PROSITE" id="PS50112">
    <property type="entry name" value="PAS"/>
    <property type="match status" value="2"/>
</dbReference>
<organism>
    <name type="scientific">Homo sapiens</name>
    <name type="common">Human</name>
    <dbReference type="NCBI Taxonomy" id="9606"/>
    <lineage>
        <taxon>Eukaryota</taxon>
        <taxon>Metazoa</taxon>
        <taxon>Chordata</taxon>
        <taxon>Craniata</taxon>
        <taxon>Vertebrata</taxon>
        <taxon>Euteleostomi</taxon>
        <taxon>Mammalia</taxon>
        <taxon>Eutheria</taxon>
        <taxon>Euarchontoglires</taxon>
        <taxon>Primates</taxon>
        <taxon>Haplorrhini</taxon>
        <taxon>Catarrhini</taxon>
        <taxon>Hominidae</taxon>
        <taxon>Homo</taxon>
    </lineage>
</organism>